<dbReference type="EMBL" id="CU928158">
    <property type="protein sequence ID" value="CAQ89760.1"/>
    <property type="molecule type" value="Genomic_DNA"/>
</dbReference>
<dbReference type="RefSeq" id="WP_002431443.1">
    <property type="nucleotide sequence ID" value="NC_011740.1"/>
</dbReference>
<dbReference type="SMR" id="B7LJR2"/>
<dbReference type="GeneID" id="75056710"/>
<dbReference type="KEGG" id="efe:EFER_2259"/>
<dbReference type="HOGENOM" id="CLU_074944_2_0_6"/>
<dbReference type="OrthoDB" id="5599402at2"/>
<dbReference type="Proteomes" id="UP000000745">
    <property type="component" value="Chromosome"/>
</dbReference>
<dbReference type="GO" id="GO:0005829">
    <property type="term" value="C:cytosol"/>
    <property type="evidence" value="ECO:0007669"/>
    <property type="project" value="UniProtKB-ARBA"/>
</dbReference>
<dbReference type="GO" id="GO:0003746">
    <property type="term" value="F:translation elongation factor activity"/>
    <property type="evidence" value="ECO:0007669"/>
    <property type="project" value="UniProtKB-UniRule"/>
</dbReference>
<dbReference type="GO" id="GO:0043043">
    <property type="term" value="P:peptide biosynthetic process"/>
    <property type="evidence" value="ECO:0007669"/>
    <property type="project" value="InterPro"/>
</dbReference>
<dbReference type="CDD" id="cd04470">
    <property type="entry name" value="S1_EF-P_repeat_1"/>
    <property type="match status" value="1"/>
</dbReference>
<dbReference type="CDD" id="cd05794">
    <property type="entry name" value="S1_EF-P_repeat_2"/>
    <property type="match status" value="1"/>
</dbReference>
<dbReference type="FunFam" id="2.40.50.140:FF:000004">
    <property type="entry name" value="Elongation factor P"/>
    <property type="match status" value="1"/>
</dbReference>
<dbReference type="FunFam" id="2.30.30.30:FF:000011">
    <property type="entry name" value="Elongation factor P-like protein"/>
    <property type="match status" value="1"/>
</dbReference>
<dbReference type="FunFam" id="2.40.50.140:FF:000053">
    <property type="entry name" value="Elongation factor P-like protein"/>
    <property type="match status" value="1"/>
</dbReference>
<dbReference type="Gene3D" id="2.30.30.30">
    <property type="match status" value="1"/>
</dbReference>
<dbReference type="Gene3D" id="2.40.50.140">
    <property type="entry name" value="Nucleic acid-binding proteins"/>
    <property type="match status" value="2"/>
</dbReference>
<dbReference type="HAMAP" id="MF_00646">
    <property type="entry name" value="EFP"/>
    <property type="match status" value="1"/>
</dbReference>
<dbReference type="InterPro" id="IPR015365">
    <property type="entry name" value="Elong-fact-P_C"/>
</dbReference>
<dbReference type="InterPro" id="IPR012340">
    <property type="entry name" value="NA-bd_OB-fold"/>
</dbReference>
<dbReference type="InterPro" id="IPR014722">
    <property type="entry name" value="Rib_uL2_dom2"/>
</dbReference>
<dbReference type="InterPro" id="IPR020599">
    <property type="entry name" value="Transl_elong_fac_P/YeiP"/>
</dbReference>
<dbReference type="InterPro" id="IPR013185">
    <property type="entry name" value="Transl_elong_KOW-like"/>
</dbReference>
<dbReference type="InterPro" id="IPR011897">
    <property type="entry name" value="Transl_elong_p-like_YeiP"/>
</dbReference>
<dbReference type="InterPro" id="IPR001059">
    <property type="entry name" value="Transl_elong_P/YeiP_cen"/>
</dbReference>
<dbReference type="InterPro" id="IPR013852">
    <property type="entry name" value="Transl_elong_P/YeiP_CS"/>
</dbReference>
<dbReference type="InterPro" id="IPR008991">
    <property type="entry name" value="Translation_prot_SH3-like_sf"/>
</dbReference>
<dbReference type="NCBIfam" id="NF001810">
    <property type="entry name" value="PRK00529.1"/>
    <property type="match status" value="1"/>
</dbReference>
<dbReference type="NCBIfam" id="NF003392">
    <property type="entry name" value="PRK04542.1"/>
    <property type="match status" value="1"/>
</dbReference>
<dbReference type="NCBIfam" id="TIGR02178">
    <property type="entry name" value="yeiP"/>
    <property type="match status" value="1"/>
</dbReference>
<dbReference type="PANTHER" id="PTHR30053">
    <property type="entry name" value="ELONGATION FACTOR P"/>
    <property type="match status" value="1"/>
</dbReference>
<dbReference type="PANTHER" id="PTHR30053:SF14">
    <property type="entry name" value="TRANSLATION ELONGATION FACTOR KOW-LIKE DOMAIN-CONTAINING PROTEIN"/>
    <property type="match status" value="1"/>
</dbReference>
<dbReference type="Pfam" id="PF01132">
    <property type="entry name" value="EFP"/>
    <property type="match status" value="1"/>
</dbReference>
<dbReference type="Pfam" id="PF08207">
    <property type="entry name" value="EFP_N"/>
    <property type="match status" value="1"/>
</dbReference>
<dbReference type="Pfam" id="PF09285">
    <property type="entry name" value="Elong-fact-P_C"/>
    <property type="match status" value="1"/>
</dbReference>
<dbReference type="PIRSF" id="PIRSF005901">
    <property type="entry name" value="EF-P"/>
    <property type="match status" value="1"/>
</dbReference>
<dbReference type="SMART" id="SM01185">
    <property type="entry name" value="EFP"/>
    <property type="match status" value="1"/>
</dbReference>
<dbReference type="SMART" id="SM00841">
    <property type="entry name" value="Elong-fact-P_C"/>
    <property type="match status" value="1"/>
</dbReference>
<dbReference type="SUPFAM" id="SSF50249">
    <property type="entry name" value="Nucleic acid-binding proteins"/>
    <property type="match status" value="2"/>
</dbReference>
<dbReference type="SUPFAM" id="SSF50104">
    <property type="entry name" value="Translation proteins SH3-like domain"/>
    <property type="match status" value="1"/>
</dbReference>
<dbReference type="PROSITE" id="PS01275">
    <property type="entry name" value="EFP"/>
    <property type="match status" value="1"/>
</dbReference>
<sequence>MPRANEIKKGMVLNYNGKLLLVKDIDIQSPTARGAATLYKMRFSDVRTGLKVEERFKGDDIVDTVTLTRRYVDFSYVDGNEYVFMDKEDYTPYTFTKDQIEEELMFMPEGGMPDMQVLTWDGQLLALELPQTVDLEIIETAPGIKGASASARNKPATLSTGLVIQVPEYLSPGEKIRIHIEERRYMGRAD</sequence>
<feature type="chain" id="PRO_1000130918" description="Elongation factor P-like protein">
    <location>
        <begin position="1"/>
        <end position="190"/>
    </location>
</feature>
<accession>B7LJR2</accession>
<comment type="similarity">
    <text evidence="1">Belongs to the elongation factor P family.</text>
</comment>
<organism>
    <name type="scientific">Escherichia fergusonii (strain ATCC 35469 / DSM 13698 / CCUG 18766 / IAM 14443 / JCM 21226 / LMG 7866 / NBRC 102419 / NCTC 12128 / CDC 0568-73)</name>
    <dbReference type="NCBI Taxonomy" id="585054"/>
    <lineage>
        <taxon>Bacteria</taxon>
        <taxon>Pseudomonadati</taxon>
        <taxon>Pseudomonadota</taxon>
        <taxon>Gammaproteobacteria</taxon>
        <taxon>Enterobacterales</taxon>
        <taxon>Enterobacteriaceae</taxon>
        <taxon>Escherichia</taxon>
    </lineage>
</organism>
<reference key="1">
    <citation type="journal article" date="2009" name="PLoS Genet.">
        <title>Organised genome dynamics in the Escherichia coli species results in highly diverse adaptive paths.</title>
        <authorList>
            <person name="Touchon M."/>
            <person name="Hoede C."/>
            <person name="Tenaillon O."/>
            <person name="Barbe V."/>
            <person name="Baeriswyl S."/>
            <person name="Bidet P."/>
            <person name="Bingen E."/>
            <person name="Bonacorsi S."/>
            <person name="Bouchier C."/>
            <person name="Bouvet O."/>
            <person name="Calteau A."/>
            <person name="Chiapello H."/>
            <person name="Clermont O."/>
            <person name="Cruveiller S."/>
            <person name="Danchin A."/>
            <person name="Diard M."/>
            <person name="Dossat C."/>
            <person name="Karoui M.E."/>
            <person name="Frapy E."/>
            <person name="Garry L."/>
            <person name="Ghigo J.M."/>
            <person name="Gilles A.M."/>
            <person name="Johnson J."/>
            <person name="Le Bouguenec C."/>
            <person name="Lescat M."/>
            <person name="Mangenot S."/>
            <person name="Martinez-Jehanne V."/>
            <person name="Matic I."/>
            <person name="Nassif X."/>
            <person name="Oztas S."/>
            <person name="Petit M.A."/>
            <person name="Pichon C."/>
            <person name="Rouy Z."/>
            <person name="Ruf C.S."/>
            <person name="Schneider D."/>
            <person name="Tourret J."/>
            <person name="Vacherie B."/>
            <person name="Vallenet D."/>
            <person name="Medigue C."/>
            <person name="Rocha E.P.C."/>
            <person name="Denamur E."/>
        </authorList>
    </citation>
    <scope>NUCLEOTIDE SEQUENCE [LARGE SCALE GENOMIC DNA]</scope>
    <source>
        <strain>ATCC 35469 / DSM 13698 / BCRC 15582 / CCUG 18766 / IAM 14443 / JCM 21226 / LMG 7866 / NBRC 102419 / NCTC 12128 / CDC 0568-73</strain>
    </source>
</reference>
<proteinExistence type="inferred from homology"/>
<evidence type="ECO:0000255" key="1">
    <source>
        <dbReference type="HAMAP-Rule" id="MF_00646"/>
    </source>
</evidence>
<name>EFPL_ESCF3</name>
<protein>
    <recommendedName>
        <fullName evidence="1">Elongation factor P-like protein</fullName>
    </recommendedName>
</protein>
<gene>
    <name evidence="1" type="primary">yeiP</name>
    <name type="ordered locus">EFER_2259</name>
</gene>